<protein>
    <recommendedName>
        <fullName evidence="6 7">Notch homolog 2 N-terminal-like protein B</fullName>
    </recommendedName>
</protein>
<dbReference type="EMBL" id="AC239811">
    <property type="status" value="NOT_ANNOTATED_CDS"/>
    <property type="molecule type" value="Genomic_DNA"/>
</dbReference>
<dbReference type="CCDS" id="CCDS86012.1">
    <molecule id="P0DPK3-2"/>
</dbReference>
<dbReference type="RefSeq" id="NP_001350936.1">
    <molecule id="P0DPK3-1"/>
    <property type="nucleotide sequence ID" value="NM_001364007.2"/>
</dbReference>
<dbReference type="RefSeq" id="NP_001350937.1">
    <molecule id="P0DPK3-2"/>
    <property type="nucleotide sequence ID" value="NM_001364008.2"/>
</dbReference>
<dbReference type="SMR" id="P0DPK3"/>
<dbReference type="FunCoup" id="P0DPK3">
    <property type="interactions" value="3"/>
</dbReference>
<dbReference type="STRING" id="9606.ENSP00000472124"/>
<dbReference type="GlyCosmos" id="P0DPK3">
    <property type="glycosylation" value="2 sites, No reported glycans"/>
</dbReference>
<dbReference type="GlyGen" id="P0DPK3">
    <property type="glycosylation" value="2 sites"/>
</dbReference>
<dbReference type="jPOST" id="P0DPK3"/>
<dbReference type="MassIVE" id="P0DPK3"/>
<dbReference type="PaxDb" id="9606-ENSP00000464060"/>
<dbReference type="PeptideAtlas" id="P0DPK3"/>
<dbReference type="Ensembl" id="ENST00000593495.4">
    <molecule id="P0DPK3-2"/>
    <property type="protein sequence ID" value="ENSP00000472124.1"/>
    <property type="gene ID" value="ENSG00000286019.2"/>
</dbReference>
<dbReference type="GeneID" id="100996763"/>
<dbReference type="MANE-Select" id="ENST00000593495.4">
    <molecule id="P0DPK3-2"/>
    <property type="protein sequence ID" value="ENSP00000472124.1"/>
    <property type="RefSeq nucleotide sequence ID" value="NM_001364008.2"/>
    <property type="RefSeq protein sequence ID" value="NP_001350937.1"/>
</dbReference>
<dbReference type="AGR" id="HGNC:53923"/>
<dbReference type="GeneCards" id="NOTCH2NLB"/>
<dbReference type="HGNC" id="HGNC:53923">
    <property type="gene designation" value="NOTCH2NLB"/>
</dbReference>
<dbReference type="HPA" id="ENSG00000286019">
    <property type="expression patterns" value="Low tissue specificity"/>
</dbReference>
<dbReference type="neXtProt" id="NX_P0DPK3"/>
<dbReference type="VEuPathDB" id="HostDB:ENSG00000286019"/>
<dbReference type="GeneTree" id="ENSGT00940000167308"/>
<dbReference type="InParanoid" id="P0DPK3"/>
<dbReference type="OMA" id="CEKKTIC"/>
<dbReference type="OrthoDB" id="283575at2759"/>
<dbReference type="PAN-GO" id="P0DPK3">
    <property type="GO annotations" value="0 GO annotations based on evolutionary models"/>
</dbReference>
<dbReference type="Reactome" id="R-HSA-2979096">
    <property type="pathway name" value="NOTCH2 Activation and Transmission of Signal to the Nucleus"/>
</dbReference>
<dbReference type="Reactome" id="R-HSA-9911233">
    <property type="pathway name" value="Expression of NOTCH2NL genes"/>
</dbReference>
<dbReference type="ChiTaRS" id="NOTCH2NLB">
    <property type="organism name" value="human"/>
</dbReference>
<dbReference type="Pharos" id="P0DPK3">
    <property type="development level" value="Tbio"/>
</dbReference>
<dbReference type="PRO" id="PR:P0DPK3"/>
<dbReference type="Proteomes" id="UP000005640">
    <property type="component" value="Chromosome 1"/>
</dbReference>
<dbReference type="Bgee" id="ENSG00000286019">
    <property type="expression patterns" value="Expressed in primordial germ cell in gonad and 94 other cell types or tissues"/>
</dbReference>
<dbReference type="GO" id="GO:0005576">
    <property type="term" value="C:extracellular region"/>
    <property type="evidence" value="ECO:0000314"/>
    <property type="project" value="UniProtKB"/>
</dbReference>
<dbReference type="GO" id="GO:0005509">
    <property type="term" value="F:calcium ion binding"/>
    <property type="evidence" value="ECO:0007669"/>
    <property type="project" value="InterPro"/>
</dbReference>
<dbReference type="GO" id="GO:0005112">
    <property type="term" value="F:Notch binding"/>
    <property type="evidence" value="ECO:0000353"/>
    <property type="project" value="UniProtKB"/>
</dbReference>
<dbReference type="GO" id="GO:0021987">
    <property type="term" value="P:cerebral cortex development"/>
    <property type="evidence" value="ECO:0000314"/>
    <property type="project" value="UniProtKB"/>
</dbReference>
<dbReference type="GO" id="GO:0007219">
    <property type="term" value="P:Notch signaling pathway"/>
    <property type="evidence" value="ECO:0007669"/>
    <property type="project" value="UniProtKB-KW"/>
</dbReference>
<dbReference type="GO" id="GO:0045747">
    <property type="term" value="P:positive regulation of Notch signaling pathway"/>
    <property type="evidence" value="ECO:0000314"/>
    <property type="project" value="UniProtKB"/>
</dbReference>
<dbReference type="CDD" id="cd00054">
    <property type="entry name" value="EGF_CA"/>
    <property type="match status" value="3"/>
</dbReference>
<dbReference type="FunFam" id="2.10.25.10:FF:000151">
    <property type="entry name" value="FAT atypical cadherin 4"/>
    <property type="match status" value="1"/>
</dbReference>
<dbReference type="FunFam" id="2.10.25.10:FF:000393">
    <property type="entry name" value="Neurogenic locus notch homolog protein 2"/>
    <property type="match status" value="1"/>
</dbReference>
<dbReference type="FunFam" id="2.10.25.10:FF:000423">
    <property type="entry name" value="Neurogenic locus notch homolog protein 2"/>
    <property type="match status" value="1"/>
</dbReference>
<dbReference type="FunFam" id="2.10.25.10:FF:000801">
    <property type="entry name" value="Notch homolog 2 N-terminal-like protein C"/>
    <property type="match status" value="1"/>
</dbReference>
<dbReference type="FunFam" id="2.10.25.10:FF:000095">
    <property type="entry name" value="Notch, isoform B"/>
    <property type="match status" value="1"/>
</dbReference>
<dbReference type="Gene3D" id="2.10.25.10">
    <property type="entry name" value="Laminin"/>
    <property type="match status" value="6"/>
</dbReference>
<dbReference type="InterPro" id="IPR001881">
    <property type="entry name" value="EGF-like_Ca-bd_dom"/>
</dbReference>
<dbReference type="InterPro" id="IPR000742">
    <property type="entry name" value="EGF-like_dom"/>
</dbReference>
<dbReference type="InterPro" id="IPR000152">
    <property type="entry name" value="EGF-type_Asp/Asn_hydroxyl_site"/>
</dbReference>
<dbReference type="InterPro" id="IPR018097">
    <property type="entry name" value="EGF_Ca-bd_CS"/>
</dbReference>
<dbReference type="InterPro" id="IPR049883">
    <property type="entry name" value="NOTCH1_EGF-like"/>
</dbReference>
<dbReference type="PANTHER" id="PTHR12916">
    <property type="entry name" value="CYTOCHROME C OXIDASE POLYPEPTIDE VIC-2"/>
    <property type="match status" value="1"/>
</dbReference>
<dbReference type="PANTHER" id="PTHR12916:SF13">
    <property type="entry name" value="SUSHI, VON WILLEBRAND FACTOR TYPE A, EGF AND PENTRAXIN DOMAIN-CONTAINING PROTEIN 1-LIKE"/>
    <property type="match status" value="1"/>
</dbReference>
<dbReference type="Pfam" id="PF00008">
    <property type="entry name" value="EGF"/>
    <property type="match status" value="3"/>
</dbReference>
<dbReference type="Pfam" id="PF07645">
    <property type="entry name" value="EGF_CA"/>
    <property type="match status" value="1"/>
</dbReference>
<dbReference type="SMART" id="SM00181">
    <property type="entry name" value="EGF"/>
    <property type="match status" value="6"/>
</dbReference>
<dbReference type="SMART" id="SM00179">
    <property type="entry name" value="EGF_CA"/>
    <property type="match status" value="4"/>
</dbReference>
<dbReference type="SUPFAM" id="SSF57196">
    <property type="entry name" value="EGF/Laminin"/>
    <property type="match status" value="6"/>
</dbReference>
<dbReference type="PROSITE" id="PS00010">
    <property type="entry name" value="ASX_HYDROXYL"/>
    <property type="match status" value="1"/>
</dbReference>
<dbReference type="PROSITE" id="PS00022">
    <property type="entry name" value="EGF_1"/>
    <property type="match status" value="5"/>
</dbReference>
<dbReference type="PROSITE" id="PS01186">
    <property type="entry name" value="EGF_2"/>
    <property type="match status" value="5"/>
</dbReference>
<dbReference type="PROSITE" id="PS50026">
    <property type="entry name" value="EGF_3"/>
    <property type="match status" value="6"/>
</dbReference>
<dbReference type="PROSITE" id="PS01187">
    <property type="entry name" value="EGF_CA"/>
    <property type="match status" value="1"/>
</dbReference>
<feature type="signal peptide" evidence="1">
    <location>
        <begin position="1"/>
        <end position="25"/>
    </location>
</feature>
<feature type="chain" id="PRO_0000445070" description="Notch homolog 2 N-terminal-like protein B" evidence="1">
    <location>
        <begin position="26"/>
        <end position="275"/>
    </location>
</feature>
<feature type="domain" description="EGF-like 1" evidence="2">
    <location>
        <begin position="26"/>
        <end position="63"/>
    </location>
</feature>
<feature type="domain" description="EGF-like 2" evidence="2">
    <location>
        <begin position="64"/>
        <end position="102"/>
    </location>
</feature>
<feature type="domain" description="EGF-like 3" evidence="2">
    <location>
        <begin position="105"/>
        <end position="143"/>
    </location>
</feature>
<feature type="domain" description="EGF-like 4" evidence="2">
    <location>
        <begin position="144"/>
        <end position="180"/>
    </location>
</feature>
<feature type="domain" description="EGF-like 5; calcium-binding" evidence="2">
    <location>
        <begin position="182"/>
        <end position="219"/>
    </location>
</feature>
<feature type="domain" description="EGF-like 6" evidence="2">
    <location>
        <begin position="221"/>
        <end position="258"/>
    </location>
</feature>
<feature type="glycosylation site" description="N-linked (GlcNAc...) asparagine" evidence="1">
    <location>
        <position position="46"/>
    </location>
</feature>
<feature type="glycosylation site" description="N-linked (GlcNAc...) asparagine" evidence="1">
    <location>
        <position position="155"/>
    </location>
</feature>
<feature type="disulfide bond" evidence="2">
    <location>
        <begin position="28"/>
        <end position="41"/>
    </location>
</feature>
<feature type="disulfide bond" evidence="2">
    <location>
        <begin position="35"/>
        <end position="51"/>
    </location>
</feature>
<feature type="disulfide bond" evidence="2">
    <location>
        <begin position="53"/>
        <end position="62"/>
    </location>
</feature>
<feature type="disulfide bond" evidence="2">
    <location>
        <begin position="68"/>
        <end position="79"/>
    </location>
</feature>
<feature type="disulfide bond" evidence="2">
    <location>
        <begin position="73"/>
        <end position="90"/>
    </location>
</feature>
<feature type="disulfide bond" evidence="2">
    <location>
        <begin position="92"/>
        <end position="101"/>
    </location>
</feature>
<feature type="disulfide bond" evidence="2">
    <location>
        <begin position="109"/>
        <end position="121"/>
    </location>
</feature>
<feature type="disulfide bond" evidence="2">
    <location>
        <begin position="115"/>
        <end position="131"/>
    </location>
</feature>
<feature type="disulfide bond" evidence="2">
    <location>
        <begin position="133"/>
        <end position="142"/>
    </location>
</feature>
<feature type="disulfide bond" evidence="2">
    <location>
        <begin position="148"/>
        <end position="159"/>
    </location>
</feature>
<feature type="disulfide bond" evidence="2">
    <location>
        <begin position="153"/>
        <end position="168"/>
    </location>
</feature>
<feature type="disulfide bond" evidence="2">
    <location>
        <begin position="170"/>
        <end position="179"/>
    </location>
</feature>
<feature type="disulfide bond" evidence="2">
    <location>
        <begin position="186"/>
        <end position="198"/>
    </location>
</feature>
<feature type="disulfide bond" evidence="2">
    <location>
        <begin position="192"/>
        <end position="207"/>
    </location>
</feature>
<feature type="disulfide bond" evidence="2">
    <location>
        <begin position="209"/>
        <end position="218"/>
    </location>
</feature>
<feature type="disulfide bond" evidence="2">
    <location>
        <begin position="225"/>
        <end position="236"/>
    </location>
</feature>
<feature type="disulfide bond" evidence="2">
    <location>
        <begin position="230"/>
        <end position="246"/>
    </location>
</feature>
<feature type="splice variant" id="VSP_059805" description="In isoform 2.">
    <original>MPALRPALLWALLALWLCCATPAHALQ</original>
    <variation>M</variation>
    <location>
        <begin position="1"/>
        <end position="27"/>
    </location>
</feature>
<name>NT2NB_HUMAN</name>
<accession>P0DPK3</accession>
<gene>
    <name evidence="6 7 9" type="primary">NOTCH2NLB</name>
</gene>
<proteinExistence type="evidence at protein level"/>
<sequence length="275" mass="30097">MPALRPALLWALLALWLCCATPAHALQCRDGYEPCVNEGMCVTYHNGTGYCKCPEGFLGEYCQHRDPCEKNRCQNGGTCVAQAMLGKATCRCASGFTGEDCQYSTSHPCFVSRPCLNGGTCHMLSRDTYECTCQVGFTGKECQWTDACLSHPCANGSTCTTVANQFSCKCLTGFTGQKCETDVNECDIPGHCQHGGICLNLPGSYQCQCLQGFTGQYCDSLYVPCAPSPCVNGGTCRQTGDFTFECNCLPETVRRGTELWERDREVWNGKEHDEN</sequence>
<reference key="1">
    <citation type="journal article" date="2006" name="Nature">
        <title>The DNA sequence and biological annotation of human chromosome 1.</title>
        <authorList>
            <person name="Gregory S.G."/>
            <person name="Barlow K.F."/>
            <person name="McLay K.E."/>
            <person name="Kaul R."/>
            <person name="Swarbreck D."/>
            <person name="Dunham A."/>
            <person name="Scott C.E."/>
            <person name="Howe K.L."/>
            <person name="Woodfine K."/>
            <person name="Spencer C.C.A."/>
            <person name="Jones M.C."/>
            <person name="Gillson C."/>
            <person name="Searle S."/>
            <person name="Zhou Y."/>
            <person name="Kokocinski F."/>
            <person name="McDonald L."/>
            <person name="Evans R."/>
            <person name="Phillips K."/>
            <person name="Atkinson A."/>
            <person name="Cooper R."/>
            <person name="Jones C."/>
            <person name="Hall R.E."/>
            <person name="Andrews T.D."/>
            <person name="Lloyd C."/>
            <person name="Ainscough R."/>
            <person name="Almeida J.P."/>
            <person name="Ambrose K.D."/>
            <person name="Anderson F."/>
            <person name="Andrew R.W."/>
            <person name="Ashwell R.I.S."/>
            <person name="Aubin K."/>
            <person name="Babbage A.K."/>
            <person name="Bagguley C.L."/>
            <person name="Bailey J."/>
            <person name="Beasley H."/>
            <person name="Bethel G."/>
            <person name="Bird C.P."/>
            <person name="Bray-Allen S."/>
            <person name="Brown J.Y."/>
            <person name="Brown A.J."/>
            <person name="Buckley D."/>
            <person name="Burton J."/>
            <person name="Bye J."/>
            <person name="Carder C."/>
            <person name="Chapman J.C."/>
            <person name="Clark S.Y."/>
            <person name="Clarke G."/>
            <person name="Clee C."/>
            <person name="Cobley V."/>
            <person name="Collier R.E."/>
            <person name="Corby N."/>
            <person name="Coville G.J."/>
            <person name="Davies J."/>
            <person name="Deadman R."/>
            <person name="Dunn M."/>
            <person name="Earthrowl M."/>
            <person name="Ellington A.G."/>
            <person name="Errington H."/>
            <person name="Frankish A."/>
            <person name="Frankland J."/>
            <person name="French L."/>
            <person name="Garner P."/>
            <person name="Garnett J."/>
            <person name="Gay L."/>
            <person name="Ghori M.R.J."/>
            <person name="Gibson R."/>
            <person name="Gilby L.M."/>
            <person name="Gillett W."/>
            <person name="Glithero R.J."/>
            <person name="Grafham D.V."/>
            <person name="Griffiths C."/>
            <person name="Griffiths-Jones S."/>
            <person name="Grocock R."/>
            <person name="Hammond S."/>
            <person name="Harrison E.S.I."/>
            <person name="Hart E."/>
            <person name="Haugen E."/>
            <person name="Heath P.D."/>
            <person name="Holmes S."/>
            <person name="Holt K."/>
            <person name="Howden P.J."/>
            <person name="Hunt A.R."/>
            <person name="Hunt S.E."/>
            <person name="Hunter G."/>
            <person name="Isherwood J."/>
            <person name="James R."/>
            <person name="Johnson C."/>
            <person name="Johnson D."/>
            <person name="Joy A."/>
            <person name="Kay M."/>
            <person name="Kershaw J.K."/>
            <person name="Kibukawa M."/>
            <person name="Kimberley A.M."/>
            <person name="King A."/>
            <person name="Knights A.J."/>
            <person name="Lad H."/>
            <person name="Laird G."/>
            <person name="Lawlor S."/>
            <person name="Leongamornlert D.A."/>
            <person name="Lloyd D.M."/>
            <person name="Loveland J."/>
            <person name="Lovell J."/>
            <person name="Lush M.J."/>
            <person name="Lyne R."/>
            <person name="Martin S."/>
            <person name="Mashreghi-Mohammadi M."/>
            <person name="Matthews L."/>
            <person name="Matthews N.S.W."/>
            <person name="McLaren S."/>
            <person name="Milne S."/>
            <person name="Mistry S."/>
            <person name="Moore M.J.F."/>
            <person name="Nickerson T."/>
            <person name="O'Dell C.N."/>
            <person name="Oliver K."/>
            <person name="Palmeiri A."/>
            <person name="Palmer S.A."/>
            <person name="Parker A."/>
            <person name="Patel D."/>
            <person name="Pearce A.V."/>
            <person name="Peck A.I."/>
            <person name="Pelan S."/>
            <person name="Phelps K."/>
            <person name="Phillimore B.J."/>
            <person name="Plumb R."/>
            <person name="Rajan J."/>
            <person name="Raymond C."/>
            <person name="Rouse G."/>
            <person name="Saenphimmachak C."/>
            <person name="Sehra H.K."/>
            <person name="Sheridan E."/>
            <person name="Shownkeen R."/>
            <person name="Sims S."/>
            <person name="Skuce C.D."/>
            <person name="Smith M."/>
            <person name="Steward C."/>
            <person name="Subramanian S."/>
            <person name="Sycamore N."/>
            <person name="Tracey A."/>
            <person name="Tromans A."/>
            <person name="Van Helmond Z."/>
            <person name="Wall M."/>
            <person name="Wallis J.M."/>
            <person name="White S."/>
            <person name="Whitehead S.L."/>
            <person name="Wilkinson J.E."/>
            <person name="Willey D.L."/>
            <person name="Williams H."/>
            <person name="Wilming L."/>
            <person name="Wray P.W."/>
            <person name="Wu Z."/>
            <person name="Coulson A."/>
            <person name="Vaudin M."/>
            <person name="Sulston J.E."/>
            <person name="Durbin R.M."/>
            <person name="Hubbard T."/>
            <person name="Wooster R."/>
            <person name="Dunham I."/>
            <person name="Carter N.P."/>
            <person name="McVean G."/>
            <person name="Ross M.T."/>
            <person name="Harrow J."/>
            <person name="Olson M.V."/>
            <person name="Beck S."/>
            <person name="Rogers J."/>
            <person name="Bentley D.R."/>
        </authorList>
    </citation>
    <scope>NUCLEOTIDE SEQUENCE [LARGE SCALE GENOMIC DNA]</scope>
</reference>
<reference key="2">
    <citation type="journal article" date="2018" name="Cell">
        <title>Human-specific NOTCH2NL genes affect Notch signaling and cortical neurogenesis.</title>
        <authorList>
            <person name="Fiddes I.T."/>
            <person name="Lodewijk G.A."/>
            <person name="Mooring M."/>
            <person name="Bosworth C.M."/>
            <person name="Ewing A.D."/>
            <person name="Mantalas G.L."/>
            <person name="Novak A.M."/>
            <person name="van den Bout A."/>
            <person name="Bishara A."/>
            <person name="Rosenkrantz J.L."/>
            <person name="Lorig-Roach R."/>
            <person name="Field A.R."/>
            <person name="Haeussler M."/>
            <person name="Russo L."/>
            <person name="Bhaduri A."/>
            <person name="Nowakowski T.J."/>
            <person name="Pollen A.A."/>
            <person name="Dougherty M.L."/>
            <person name="Nuttle X."/>
            <person name="Addor M.C."/>
            <person name="Zwolinski S."/>
            <person name="Katzman S."/>
            <person name="Kriegstein A."/>
            <person name="Eichler E.E."/>
            <person name="Salama S.R."/>
            <person name="Jacobs F.M.J."/>
            <person name="Haussler D."/>
        </authorList>
    </citation>
    <scope>FUNCTION</scope>
    <scope>SUBCELLULAR LOCATION</scope>
    <scope>INTERACTION WITH NOTCH2</scope>
    <scope>TISSUE SPECIFICITY</scope>
    <scope>INVOLVEMENT IN CHROMOSOME 1Q21.1 DELETION/DUPLICATION SYNDROME</scope>
</reference>
<reference key="3">
    <citation type="journal article" date="2018" name="Cell">
        <title>Human-specific NOTCH2NL genes expand cortical neurogenesis through Delta/Notch regulation.</title>
        <authorList>
            <person name="Suzuki I.K."/>
            <person name="Gacquer D."/>
            <person name="Van Heurck R."/>
            <person name="Kumar D."/>
            <person name="Wojno M."/>
            <person name="Bilheu A."/>
            <person name="Herpoel A."/>
            <person name="Lambert N."/>
            <person name="Cheron J."/>
            <person name="Polleux F."/>
            <person name="Detours V."/>
            <person name="Vanderhaeghen P."/>
        </authorList>
    </citation>
    <scope>FUNCTION</scope>
    <scope>SUBCELLULAR LOCATION</scope>
    <scope>DEVELOPMENTAL STAGE</scope>
    <scope>INTERACTION WITH DLL1</scope>
</reference>
<reference key="4">
    <citation type="journal article" date="2018" name="Elife">
        <title>Evolution and cell-type specificity of human-specific genes preferentially expressed in progenitors of fetal neocortex.</title>
        <authorList>
            <person name="Florio M."/>
            <person name="Heide M."/>
            <person name="Pinson A."/>
            <person name="Brandl H."/>
            <person name="Albert M."/>
            <person name="Winkler S."/>
            <person name="Wimberger P."/>
            <person name="Huttner W.B."/>
            <person name="Hiller M."/>
        </authorList>
    </citation>
    <scope>FUNCTION</scope>
</reference>
<organism>
    <name type="scientific">Homo sapiens</name>
    <name type="common">Human</name>
    <dbReference type="NCBI Taxonomy" id="9606"/>
    <lineage>
        <taxon>Eukaryota</taxon>
        <taxon>Metazoa</taxon>
        <taxon>Chordata</taxon>
        <taxon>Craniata</taxon>
        <taxon>Vertebrata</taxon>
        <taxon>Euteleostomi</taxon>
        <taxon>Mammalia</taxon>
        <taxon>Eutheria</taxon>
        <taxon>Euarchontoglires</taxon>
        <taxon>Primates</taxon>
        <taxon>Haplorrhini</taxon>
        <taxon>Catarrhini</taxon>
        <taxon>Hominidae</taxon>
        <taxon>Homo</taxon>
    </lineage>
</organism>
<keyword id="KW-0025">Alternative splicing</keyword>
<keyword id="KW-0106">Calcium</keyword>
<keyword id="KW-1015">Disulfide bond</keyword>
<keyword id="KW-0245">EGF-like domain</keyword>
<keyword id="KW-0325">Glycoprotein</keyword>
<keyword id="KW-0914">Notch signaling pathway</keyword>
<keyword id="KW-1185">Reference proteome</keyword>
<keyword id="KW-0677">Repeat</keyword>
<keyword id="KW-0964">Secreted</keyword>
<keyword id="KW-0732">Signal</keyword>
<evidence type="ECO:0000255" key="1"/>
<evidence type="ECO:0000255" key="2">
    <source>
        <dbReference type="PROSITE-ProRule" id="PRU00076"/>
    </source>
</evidence>
<evidence type="ECO:0000269" key="3">
    <source>
    </source>
</evidence>
<evidence type="ECO:0000269" key="4">
    <source>
    </source>
</evidence>
<evidence type="ECO:0000269" key="5">
    <source>
    </source>
</evidence>
<evidence type="ECO:0000303" key="6">
    <source>
    </source>
</evidence>
<evidence type="ECO:0000303" key="7">
    <source>
    </source>
</evidence>
<evidence type="ECO:0000305" key="8"/>
<evidence type="ECO:0000312" key="9">
    <source>
        <dbReference type="HGNC" id="HGNC:53923"/>
    </source>
</evidence>
<comment type="function">
    <text evidence="3 4 5">Human-specific protein that promotes neural progenitor proliferation and evolutionary expansion of the brain neocortex by regulating the Notch signaling pathway (PubMed:29561261, PubMed:29856954, PubMed:29856955). Able to promote neural progenitor self-renewal, possibly by down-regulating neuronal differentiation genes, thereby delaying the differentiation of neuronal progenitors and leading to an overall final increase in neuronal production (PubMed:29856954, PubMed:29856955). Acts by enhancing the Notch signaling pathway via two different mechanisms that probably work in parallel to reach the same effect (PubMed:29856954, PubMed:29856955). Enhances Notch signaling pathway in a non-cell-autonomous manner via direct interaction with NOTCH2 (PubMed:29856954). Also promotes Notch signaling pathway in a cell-autonomous manner through inhibition of cis DLL1-NOTCH2 interactions, which promotes neuronal differentiation (PubMed:29856955).</text>
</comment>
<comment type="subunit">
    <text evidence="4 5">Interacts with NOTCH2 (PubMed:29856954). Interacts with DLL1; the interaction is direct (PubMed:29856955).</text>
</comment>
<comment type="subcellular location">
    <subcellularLocation>
        <location evidence="4 5">Secreted</location>
    </subcellularLocation>
</comment>
<comment type="alternative products">
    <event type="alternative splicing"/>
    <isoform>
        <id>P0DPK3-1</id>
        <id>A0A0B4J2B3-1</id>
        <name>1</name>
        <sequence type="displayed"/>
    </isoform>
    <isoform>
        <id>P0DPK3-2</id>
        <id>A0A0B4J2B3-2</id>
        <name>2</name>
        <sequence type="described" ref="VSP_059805"/>
    </isoform>
</comment>
<comment type="tissue specificity">
    <text evidence="4">Expressed in radial glia neural stem cells during cortical development.</text>
</comment>
<comment type="developmental stage">
    <text evidence="5">Expressed at low levels at 7-9 gestational weeks and then increases at later stages, including in the non-cortical plate region at gestational week 21, containing the outer-subventricular zone.</text>
</comment>
<comment type="disease">
    <text evidence="4">Defects in NOTCH2NLB may be a cause of chromosome 1q21.1 deletion/duplication syndrome (PubMed:29856954). Deletions of NOTCH2NL (NOTCH2NLA, NOTCH2NLB and/or NOTCH2NLC) are present in patients affected by microcephaly, whereas macrocephaly is observed in patients with NOTCH2NL duplications (PubMed:29856954).</text>
</comment>
<comment type="miscellaneous">
    <text evidence="4">NOTCH2NLA, NOTCH2NLB and NOTCH2NLC paralogs arose between 4 and 3 million years ago, after the separation of hominids from the chimpanzee and during the early stages of the expansion of the human cortex.</text>
</comment>
<comment type="similarity">
    <text evidence="8">Belongs to the NOTCH family.</text>
</comment>